<name>ATPA_GOSHI</name>
<reference key="1">
    <citation type="journal article" date="2006" name="BMC Genomics">
        <title>The complete chloroplast genome sequence of Gossypium hirsutum: organization and phylogenetic relationships to other angiosperms.</title>
        <authorList>
            <person name="Lee S.-B."/>
            <person name="Kaittanis C."/>
            <person name="Jansen R.K."/>
            <person name="Hostetler J.B."/>
            <person name="Tallon L.J."/>
            <person name="Town C.D."/>
            <person name="Daniell H."/>
        </authorList>
    </citation>
    <scope>NUCLEOTIDE SEQUENCE [LARGE SCALE GENOMIC DNA]</scope>
    <source>
        <strain>cv. Coker 310FR</strain>
    </source>
</reference>
<comment type="function">
    <text evidence="1">Produces ATP from ADP in the presence of a proton gradient across the membrane. The alpha chain is a regulatory subunit.</text>
</comment>
<comment type="catalytic activity">
    <reaction evidence="1">
        <text>ATP + H2O + 4 H(+)(in) = ADP + phosphate + 5 H(+)(out)</text>
        <dbReference type="Rhea" id="RHEA:57720"/>
        <dbReference type="ChEBI" id="CHEBI:15377"/>
        <dbReference type="ChEBI" id="CHEBI:15378"/>
        <dbReference type="ChEBI" id="CHEBI:30616"/>
        <dbReference type="ChEBI" id="CHEBI:43474"/>
        <dbReference type="ChEBI" id="CHEBI:456216"/>
        <dbReference type="EC" id="7.1.2.2"/>
    </reaction>
</comment>
<comment type="subunit">
    <text evidence="1">F-type ATPases have 2 components, CF(1) - the catalytic core - and CF(0) - the membrane proton channel. CF(1) has five subunits: alpha(3), beta(3), gamma(1), delta(1), epsilon(1). CF(0) has four main subunits: a, b, b' and c.</text>
</comment>
<comment type="subcellular location">
    <subcellularLocation>
        <location evidence="1">Plastid</location>
        <location evidence="1">Chloroplast thylakoid membrane</location>
        <topology evidence="1">Peripheral membrane protein</topology>
    </subcellularLocation>
</comment>
<comment type="similarity">
    <text evidence="1">Belongs to the ATPase alpha/beta chains family.</text>
</comment>
<feature type="chain" id="PRO_0000238422" description="ATP synthase subunit alpha, chloroplastic">
    <location>
        <begin position="1"/>
        <end position="507"/>
    </location>
</feature>
<feature type="binding site" evidence="1">
    <location>
        <begin position="170"/>
        <end position="177"/>
    </location>
    <ligand>
        <name>ATP</name>
        <dbReference type="ChEBI" id="CHEBI:30616"/>
    </ligand>
</feature>
<feature type="site" description="Required for activity" evidence="1">
    <location>
        <position position="363"/>
    </location>
</feature>
<dbReference type="EC" id="7.1.2.2" evidence="1"/>
<dbReference type="EMBL" id="DQ345959">
    <property type="protein sequence ID" value="ABC73613.1"/>
    <property type="molecule type" value="Genomic_DNA"/>
</dbReference>
<dbReference type="RefSeq" id="YP_538920.1">
    <property type="nucleotide sequence ID" value="NC_007944.1"/>
</dbReference>
<dbReference type="SMR" id="Q2L8Z1"/>
<dbReference type="GeneID" id="3989190"/>
<dbReference type="KEGG" id="ghi:3989190"/>
<dbReference type="OMA" id="QECGAME"/>
<dbReference type="OrthoDB" id="35089at41938"/>
<dbReference type="Proteomes" id="UP000189702">
    <property type="component" value="Chloroplast Pltd"/>
</dbReference>
<dbReference type="GO" id="GO:0009535">
    <property type="term" value="C:chloroplast thylakoid membrane"/>
    <property type="evidence" value="ECO:0007669"/>
    <property type="project" value="UniProtKB-SubCell"/>
</dbReference>
<dbReference type="GO" id="GO:0045259">
    <property type="term" value="C:proton-transporting ATP synthase complex"/>
    <property type="evidence" value="ECO:0007669"/>
    <property type="project" value="UniProtKB-KW"/>
</dbReference>
<dbReference type="GO" id="GO:0043531">
    <property type="term" value="F:ADP binding"/>
    <property type="evidence" value="ECO:0000318"/>
    <property type="project" value="GO_Central"/>
</dbReference>
<dbReference type="GO" id="GO:0005524">
    <property type="term" value="F:ATP binding"/>
    <property type="evidence" value="ECO:0000318"/>
    <property type="project" value="GO_Central"/>
</dbReference>
<dbReference type="GO" id="GO:0046933">
    <property type="term" value="F:proton-transporting ATP synthase activity, rotational mechanism"/>
    <property type="evidence" value="ECO:0007669"/>
    <property type="project" value="UniProtKB-UniRule"/>
</dbReference>
<dbReference type="GO" id="GO:0015986">
    <property type="term" value="P:proton motive force-driven ATP synthesis"/>
    <property type="evidence" value="ECO:0000318"/>
    <property type="project" value="GO_Central"/>
</dbReference>
<dbReference type="CDD" id="cd18113">
    <property type="entry name" value="ATP-synt_F1_alpha_C"/>
    <property type="match status" value="1"/>
</dbReference>
<dbReference type="CDD" id="cd18116">
    <property type="entry name" value="ATP-synt_F1_alpha_N"/>
    <property type="match status" value="1"/>
</dbReference>
<dbReference type="CDD" id="cd01132">
    <property type="entry name" value="F1-ATPase_alpha_CD"/>
    <property type="match status" value="1"/>
</dbReference>
<dbReference type="FunFam" id="1.20.150.20:FF:000001">
    <property type="entry name" value="ATP synthase subunit alpha"/>
    <property type="match status" value="1"/>
</dbReference>
<dbReference type="FunFam" id="2.40.30.20:FF:000001">
    <property type="entry name" value="ATP synthase subunit alpha"/>
    <property type="match status" value="1"/>
</dbReference>
<dbReference type="FunFam" id="3.40.50.300:FF:000002">
    <property type="entry name" value="ATP synthase subunit alpha"/>
    <property type="match status" value="1"/>
</dbReference>
<dbReference type="Gene3D" id="2.40.30.20">
    <property type="match status" value="1"/>
</dbReference>
<dbReference type="Gene3D" id="1.20.150.20">
    <property type="entry name" value="ATP synthase alpha/beta chain, C-terminal domain"/>
    <property type="match status" value="1"/>
</dbReference>
<dbReference type="Gene3D" id="3.40.50.300">
    <property type="entry name" value="P-loop containing nucleotide triphosphate hydrolases"/>
    <property type="match status" value="1"/>
</dbReference>
<dbReference type="HAMAP" id="MF_01346">
    <property type="entry name" value="ATP_synth_alpha_bact"/>
    <property type="match status" value="1"/>
</dbReference>
<dbReference type="InterPro" id="IPR023366">
    <property type="entry name" value="ATP_synth_asu-like_sf"/>
</dbReference>
<dbReference type="InterPro" id="IPR000793">
    <property type="entry name" value="ATP_synth_asu_C"/>
</dbReference>
<dbReference type="InterPro" id="IPR038376">
    <property type="entry name" value="ATP_synth_asu_C_sf"/>
</dbReference>
<dbReference type="InterPro" id="IPR033732">
    <property type="entry name" value="ATP_synth_F1_a_nt-bd_dom"/>
</dbReference>
<dbReference type="InterPro" id="IPR005294">
    <property type="entry name" value="ATP_synth_F1_asu"/>
</dbReference>
<dbReference type="InterPro" id="IPR020003">
    <property type="entry name" value="ATPase_a/bsu_AS"/>
</dbReference>
<dbReference type="InterPro" id="IPR004100">
    <property type="entry name" value="ATPase_F1/V1/A1_a/bsu_N"/>
</dbReference>
<dbReference type="InterPro" id="IPR036121">
    <property type="entry name" value="ATPase_F1/V1/A1_a/bsu_N_sf"/>
</dbReference>
<dbReference type="InterPro" id="IPR000194">
    <property type="entry name" value="ATPase_F1/V1/A1_a/bsu_nucl-bd"/>
</dbReference>
<dbReference type="InterPro" id="IPR027417">
    <property type="entry name" value="P-loop_NTPase"/>
</dbReference>
<dbReference type="NCBIfam" id="TIGR00962">
    <property type="entry name" value="atpA"/>
    <property type="match status" value="1"/>
</dbReference>
<dbReference type="NCBIfam" id="NF009884">
    <property type="entry name" value="PRK13343.1"/>
    <property type="match status" value="1"/>
</dbReference>
<dbReference type="PANTHER" id="PTHR48082">
    <property type="entry name" value="ATP SYNTHASE SUBUNIT ALPHA, MITOCHONDRIAL"/>
    <property type="match status" value="1"/>
</dbReference>
<dbReference type="PANTHER" id="PTHR48082:SF2">
    <property type="entry name" value="ATP SYNTHASE SUBUNIT ALPHA, MITOCHONDRIAL"/>
    <property type="match status" value="1"/>
</dbReference>
<dbReference type="Pfam" id="PF00006">
    <property type="entry name" value="ATP-synt_ab"/>
    <property type="match status" value="1"/>
</dbReference>
<dbReference type="Pfam" id="PF00306">
    <property type="entry name" value="ATP-synt_ab_C"/>
    <property type="match status" value="1"/>
</dbReference>
<dbReference type="Pfam" id="PF02874">
    <property type="entry name" value="ATP-synt_ab_N"/>
    <property type="match status" value="1"/>
</dbReference>
<dbReference type="PIRSF" id="PIRSF039088">
    <property type="entry name" value="F_ATPase_subunit_alpha"/>
    <property type="match status" value="1"/>
</dbReference>
<dbReference type="SUPFAM" id="SSF47917">
    <property type="entry name" value="C-terminal domain of alpha and beta subunits of F1 ATP synthase"/>
    <property type="match status" value="1"/>
</dbReference>
<dbReference type="SUPFAM" id="SSF50615">
    <property type="entry name" value="N-terminal domain of alpha and beta subunits of F1 ATP synthase"/>
    <property type="match status" value="1"/>
</dbReference>
<dbReference type="SUPFAM" id="SSF52540">
    <property type="entry name" value="P-loop containing nucleoside triphosphate hydrolases"/>
    <property type="match status" value="1"/>
</dbReference>
<dbReference type="PROSITE" id="PS00152">
    <property type="entry name" value="ATPASE_ALPHA_BETA"/>
    <property type="match status" value="1"/>
</dbReference>
<sequence length="507" mass="55414">MVTIRADEISNIIRERIEQYNREVKIVNTGTVLQVGDGIARIHGLDEVMAGELVEFEEGTIGIALNLESNNVGVVLMGDGLMIQEGSSVKATGKIAQIPVSEAYLGRVINALAKPIDGRGEISASESRLIESPAPGIISRRSVYEPLQTGLIAIDSMIPIGRGQRELIIGDRQTGKTAVATDTILNQQGQNVICVYVAIGQKASSVAQVVTTFQERGAMEYTIVVAETADSPATLQYLAPYTGAALAEYFMYRERHTLIIYDDLSKQAQAYRQMSLLLRRPPGREAYPGDVFYLHSRLLERAAKSSSQLGEGSMTALPIVETQSGDVSAYIPTNVISITDGQIFLSADLFNAGIRPAINVGISVSRVGSAAQIKAMKQVAGKSKLELAQFAELEAFAQFASDLDKATQNQLARGQRLRELLKQSQSAPLTVAEQISTIYTGTNGYLDSLEIGQVRKFLVELRTYLKTNKPQFQEIISSTKTFTEEAETLLKDAIQDQMERFRLQEQL</sequence>
<geneLocation type="chloroplast"/>
<gene>
    <name evidence="1" type="primary">atpA</name>
</gene>
<organism>
    <name type="scientific">Gossypium hirsutum</name>
    <name type="common">Upland cotton</name>
    <name type="synonym">Gossypium mexicanum</name>
    <dbReference type="NCBI Taxonomy" id="3635"/>
    <lineage>
        <taxon>Eukaryota</taxon>
        <taxon>Viridiplantae</taxon>
        <taxon>Streptophyta</taxon>
        <taxon>Embryophyta</taxon>
        <taxon>Tracheophyta</taxon>
        <taxon>Spermatophyta</taxon>
        <taxon>Magnoliopsida</taxon>
        <taxon>eudicotyledons</taxon>
        <taxon>Gunneridae</taxon>
        <taxon>Pentapetalae</taxon>
        <taxon>rosids</taxon>
        <taxon>malvids</taxon>
        <taxon>Malvales</taxon>
        <taxon>Malvaceae</taxon>
        <taxon>Malvoideae</taxon>
        <taxon>Gossypium</taxon>
    </lineage>
</organism>
<evidence type="ECO:0000255" key="1">
    <source>
        <dbReference type="HAMAP-Rule" id="MF_01346"/>
    </source>
</evidence>
<keyword id="KW-0066">ATP synthesis</keyword>
<keyword id="KW-0067">ATP-binding</keyword>
<keyword id="KW-0139">CF(1)</keyword>
<keyword id="KW-0150">Chloroplast</keyword>
<keyword id="KW-0375">Hydrogen ion transport</keyword>
<keyword id="KW-0406">Ion transport</keyword>
<keyword id="KW-0472">Membrane</keyword>
<keyword id="KW-0547">Nucleotide-binding</keyword>
<keyword id="KW-0934">Plastid</keyword>
<keyword id="KW-1185">Reference proteome</keyword>
<keyword id="KW-0793">Thylakoid</keyword>
<keyword id="KW-1278">Translocase</keyword>
<keyword id="KW-0813">Transport</keyword>
<protein>
    <recommendedName>
        <fullName evidence="1">ATP synthase subunit alpha, chloroplastic</fullName>
        <ecNumber evidence="1">7.1.2.2</ecNumber>
    </recommendedName>
    <alternativeName>
        <fullName evidence="1">ATP synthase F1 sector subunit alpha</fullName>
    </alternativeName>
    <alternativeName>
        <fullName evidence="1">F-ATPase subunit alpha</fullName>
    </alternativeName>
</protein>
<accession>Q2L8Z1</accession>
<proteinExistence type="inferred from homology"/>